<reference key="1">
    <citation type="journal article" date="2009" name="PLoS Pathog.">
        <title>Genomic evidence for the evolution of Streptococcus equi: host restriction, increased virulence, and genetic exchange with human pathogens.</title>
        <authorList>
            <person name="Holden M.T.G."/>
            <person name="Heather Z."/>
            <person name="Paillot R."/>
            <person name="Steward K.F."/>
            <person name="Webb K."/>
            <person name="Ainslie F."/>
            <person name="Jourdan T."/>
            <person name="Bason N.C."/>
            <person name="Holroyd N.E."/>
            <person name="Mungall K."/>
            <person name="Quail M.A."/>
            <person name="Sanders M."/>
            <person name="Simmonds M."/>
            <person name="Willey D."/>
            <person name="Brooks K."/>
            <person name="Aanensen D.M."/>
            <person name="Spratt B.G."/>
            <person name="Jolley K.A."/>
            <person name="Maiden M.C.J."/>
            <person name="Kehoe M."/>
            <person name="Chanter N."/>
            <person name="Bentley S.D."/>
            <person name="Robinson C."/>
            <person name="Maskell D.J."/>
            <person name="Parkhill J."/>
            <person name="Waller A.S."/>
        </authorList>
    </citation>
    <scope>NUCLEOTIDE SEQUENCE [LARGE SCALE GENOMIC DNA]</scope>
    <source>
        <strain>H70</strain>
    </source>
</reference>
<dbReference type="EC" id="2.4.1.21" evidence="1"/>
<dbReference type="EMBL" id="FM204884">
    <property type="protein sequence ID" value="CAW99616.1"/>
    <property type="molecule type" value="Genomic_DNA"/>
</dbReference>
<dbReference type="SMR" id="C0MH77"/>
<dbReference type="KEGG" id="seq:SZO_11710"/>
<dbReference type="PATRIC" id="fig|40041.11.peg.1236"/>
<dbReference type="eggNOG" id="COG0297">
    <property type="taxonomic scope" value="Bacteria"/>
</dbReference>
<dbReference type="HOGENOM" id="CLU_009583_18_2_9"/>
<dbReference type="UniPathway" id="UPA00164"/>
<dbReference type="Proteomes" id="UP000001368">
    <property type="component" value="Chromosome"/>
</dbReference>
<dbReference type="GO" id="GO:0009011">
    <property type="term" value="F:alpha-1,4-glucan glucosyltransferase (ADP-glucose donor) activity"/>
    <property type="evidence" value="ECO:0007669"/>
    <property type="project" value="UniProtKB-UniRule"/>
</dbReference>
<dbReference type="GO" id="GO:0004373">
    <property type="term" value="F:alpha-1,4-glucan glucosyltransferase (UDP-glucose donor) activity"/>
    <property type="evidence" value="ECO:0007669"/>
    <property type="project" value="InterPro"/>
</dbReference>
<dbReference type="GO" id="GO:0005978">
    <property type="term" value="P:glycogen biosynthetic process"/>
    <property type="evidence" value="ECO:0007669"/>
    <property type="project" value="UniProtKB-UniRule"/>
</dbReference>
<dbReference type="CDD" id="cd03791">
    <property type="entry name" value="GT5_Glycogen_synthase_DULL1-like"/>
    <property type="match status" value="1"/>
</dbReference>
<dbReference type="Gene3D" id="3.40.50.2000">
    <property type="entry name" value="Glycogen Phosphorylase B"/>
    <property type="match status" value="2"/>
</dbReference>
<dbReference type="HAMAP" id="MF_00484">
    <property type="entry name" value="Glycogen_synth"/>
    <property type="match status" value="1"/>
</dbReference>
<dbReference type="InterPro" id="IPR001296">
    <property type="entry name" value="Glyco_trans_1"/>
</dbReference>
<dbReference type="InterPro" id="IPR011835">
    <property type="entry name" value="GS/SS"/>
</dbReference>
<dbReference type="InterPro" id="IPR013534">
    <property type="entry name" value="Starch_synth_cat_dom"/>
</dbReference>
<dbReference type="NCBIfam" id="TIGR02095">
    <property type="entry name" value="glgA"/>
    <property type="match status" value="1"/>
</dbReference>
<dbReference type="NCBIfam" id="NF001898">
    <property type="entry name" value="PRK00654.1-1"/>
    <property type="match status" value="1"/>
</dbReference>
<dbReference type="PANTHER" id="PTHR45825:SF11">
    <property type="entry name" value="ALPHA AMYLASE DOMAIN-CONTAINING PROTEIN"/>
    <property type="match status" value="1"/>
</dbReference>
<dbReference type="PANTHER" id="PTHR45825">
    <property type="entry name" value="GRANULE-BOUND STARCH SYNTHASE 1, CHLOROPLASTIC/AMYLOPLASTIC"/>
    <property type="match status" value="1"/>
</dbReference>
<dbReference type="Pfam" id="PF08323">
    <property type="entry name" value="Glyco_transf_5"/>
    <property type="match status" value="1"/>
</dbReference>
<dbReference type="Pfam" id="PF00534">
    <property type="entry name" value="Glycos_transf_1"/>
    <property type="match status" value="1"/>
</dbReference>
<dbReference type="SUPFAM" id="SSF53756">
    <property type="entry name" value="UDP-Glycosyltransferase/glycogen phosphorylase"/>
    <property type="match status" value="1"/>
</dbReference>
<comment type="function">
    <text evidence="1">Synthesizes alpha-1,4-glucan chains using ADP-glucose.</text>
</comment>
<comment type="catalytic activity">
    <reaction evidence="1">
        <text>[(1-&gt;4)-alpha-D-glucosyl](n) + ADP-alpha-D-glucose = [(1-&gt;4)-alpha-D-glucosyl](n+1) + ADP + H(+)</text>
        <dbReference type="Rhea" id="RHEA:18189"/>
        <dbReference type="Rhea" id="RHEA-COMP:9584"/>
        <dbReference type="Rhea" id="RHEA-COMP:9587"/>
        <dbReference type="ChEBI" id="CHEBI:15378"/>
        <dbReference type="ChEBI" id="CHEBI:15444"/>
        <dbReference type="ChEBI" id="CHEBI:57498"/>
        <dbReference type="ChEBI" id="CHEBI:456216"/>
        <dbReference type="EC" id="2.4.1.21"/>
    </reaction>
</comment>
<comment type="pathway">
    <text evidence="1">Glycan biosynthesis; glycogen biosynthesis.</text>
</comment>
<comment type="similarity">
    <text evidence="1">Belongs to the glycosyltransferase 1 family. Bacterial/plant glycogen synthase subfamily.</text>
</comment>
<proteinExistence type="inferred from homology"/>
<gene>
    <name evidence="1" type="primary">glgA</name>
    <name type="ordered locus">SZO_11710</name>
</gene>
<feature type="chain" id="PRO_1000206434" description="Glycogen synthase">
    <location>
        <begin position="1"/>
        <end position="476"/>
    </location>
</feature>
<feature type="binding site" evidence="1">
    <location>
        <position position="15"/>
    </location>
    <ligand>
        <name>ADP-alpha-D-glucose</name>
        <dbReference type="ChEBI" id="CHEBI:57498"/>
    </ligand>
</feature>
<organism>
    <name type="scientific">Streptococcus equi subsp. zooepidemicus (strain H70)</name>
    <dbReference type="NCBI Taxonomy" id="553483"/>
    <lineage>
        <taxon>Bacteria</taxon>
        <taxon>Bacillati</taxon>
        <taxon>Bacillota</taxon>
        <taxon>Bacilli</taxon>
        <taxon>Lactobacillales</taxon>
        <taxon>Streptococcaceae</taxon>
        <taxon>Streptococcus</taxon>
    </lineage>
</organism>
<protein>
    <recommendedName>
        <fullName evidence="1">Glycogen synthase</fullName>
        <ecNumber evidence="1">2.4.1.21</ecNumber>
    </recommendedName>
    <alternativeName>
        <fullName evidence="1">Starch [bacterial glycogen] synthase</fullName>
    </alternativeName>
</protein>
<evidence type="ECO:0000255" key="1">
    <source>
        <dbReference type="HAMAP-Rule" id="MF_00484"/>
    </source>
</evidence>
<sequence length="476" mass="53641">MKIMFVAAEGAPFAKTGGLGDVIGALPKSLVKNGHEVFVILPYYDVVDQAFGHQVEDVLYFYTQVGWRRQYVGIKKLVKDKVTFYFIDNQAYFFRGRIYGDWDDGERFAYFQLAAIEAMEKIGVIPDILHVHDYHTAMIPFLLKEKYHWIQAYQAIRTVFTIHNIAFQGQFDPGMLGDLFGVGIGRYEDGTLRWHDCLNWMKAAVLYADRVTTVSPSYAHEIQTPAFGQGLDQVMRMEAGKLSGIVNGIDTDLFNPARDPHLPASFSAEDLSGKAATKQVLQERLGLPVRADVPLIGMVSRLTDQKGFQLVLEELSHILQQDVQLVLLGTGDPDYEAAFSWFAKAYPEKLSANITFDLPLAQQIYGACDLFLMPSAFEPCGLSQMMAMRYGAIPIVHEIGGLKDTVASYNAYEKTGTGFGFDQFSGFWLTQTLLFALDIYHNHKEDWQTIQQHAMTKDFSWDTASLAYLDLYKSLL</sequence>
<name>GLGA_STRS7</name>
<keyword id="KW-0320">Glycogen biosynthesis</keyword>
<keyword id="KW-0328">Glycosyltransferase</keyword>
<keyword id="KW-0808">Transferase</keyword>
<accession>C0MH77</accession>